<reference key="1">
    <citation type="journal article" date="1994" name="Science">
        <title>Complete nucleotide sequence of Saccharomyces cerevisiae chromosome VIII.</title>
        <authorList>
            <person name="Johnston M."/>
            <person name="Andrews S."/>
            <person name="Brinkman R."/>
            <person name="Cooper J."/>
            <person name="Ding H."/>
            <person name="Dover J."/>
            <person name="Du Z."/>
            <person name="Favello A."/>
            <person name="Fulton L."/>
            <person name="Gattung S."/>
            <person name="Geisel C."/>
            <person name="Kirsten J."/>
            <person name="Kucaba T."/>
            <person name="Hillier L.W."/>
            <person name="Jier M."/>
            <person name="Johnston L."/>
            <person name="Langston Y."/>
            <person name="Latreille P."/>
            <person name="Louis E.J."/>
            <person name="Macri C."/>
            <person name="Mardis E."/>
            <person name="Menezes S."/>
            <person name="Mouser L."/>
            <person name="Nhan M."/>
            <person name="Rifkin L."/>
            <person name="Riles L."/>
            <person name="St Peter H."/>
            <person name="Trevaskis E."/>
            <person name="Vaughan K."/>
            <person name="Vignati D."/>
            <person name="Wilcox L."/>
            <person name="Wohldman P."/>
            <person name="Waterston R."/>
            <person name="Wilson R."/>
            <person name="Vaudin M."/>
        </authorList>
    </citation>
    <scope>NUCLEOTIDE SEQUENCE [LARGE SCALE GENOMIC DNA]</scope>
    <source>
        <strain>ATCC 204508 / S288c</strain>
    </source>
</reference>
<reference key="2">
    <citation type="journal article" date="2014" name="G3 (Bethesda)">
        <title>The reference genome sequence of Saccharomyces cerevisiae: Then and now.</title>
        <authorList>
            <person name="Engel S.R."/>
            <person name="Dietrich F.S."/>
            <person name="Fisk D.G."/>
            <person name="Binkley G."/>
            <person name="Balakrishnan R."/>
            <person name="Costanzo M.C."/>
            <person name="Dwight S.S."/>
            <person name="Hitz B.C."/>
            <person name="Karra K."/>
            <person name="Nash R.S."/>
            <person name="Weng S."/>
            <person name="Wong E.D."/>
            <person name="Lloyd P."/>
            <person name="Skrzypek M.S."/>
            <person name="Miyasato S.R."/>
            <person name="Simison M."/>
            <person name="Cherry J.M."/>
        </authorList>
    </citation>
    <scope>GENOME REANNOTATION</scope>
    <source>
        <strain>ATCC 204508 / S288c</strain>
    </source>
</reference>
<reference key="3">
    <citation type="journal article" date="2008" name="Genetics">
        <title>A genomewide suppressor and enhancer analysis of cdc13-1 reveals varied cellular processes influencing telomere capping in Saccharomyces cerevisiae.</title>
        <authorList>
            <person name="Addinall S.G."/>
            <person name="Downey M."/>
            <person name="Yu M."/>
            <person name="Zubko M.K."/>
            <person name="Dewar J."/>
            <person name="Leake A."/>
            <person name="Hallinan J."/>
            <person name="Shaw O."/>
            <person name="James K."/>
            <person name="Wilkinson D.J."/>
            <person name="Wipat A."/>
            <person name="Durocher D."/>
            <person name="Lydall D."/>
        </authorList>
    </citation>
    <scope>FUNCTION</scope>
</reference>
<organism>
    <name type="scientific">Saccharomyces cerevisiae (strain ATCC 204508 / S288c)</name>
    <name type="common">Baker's yeast</name>
    <dbReference type="NCBI Taxonomy" id="559292"/>
    <lineage>
        <taxon>Eukaryota</taxon>
        <taxon>Fungi</taxon>
        <taxon>Dikarya</taxon>
        <taxon>Ascomycota</taxon>
        <taxon>Saccharomycotina</taxon>
        <taxon>Saccharomycetes</taxon>
        <taxon>Saccharomycetales</taxon>
        <taxon>Saccharomycetaceae</taxon>
        <taxon>Saccharomyces</taxon>
    </lineage>
</organism>
<feature type="signal peptide" evidence="1">
    <location>
        <begin position="1"/>
        <end position="20"/>
    </location>
</feature>
<feature type="chain" id="PRO_0000202926" description="Maintenance of telomere capping protein 6">
    <location>
        <begin position="21"/>
        <end position="526"/>
    </location>
</feature>
<feature type="topological domain" description="Extracellular" evidence="1">
    <location>
        <begin position="21"/>
        <end position="477"/>
    </location>
</feature>
<feature type="transmembrane region" description="Helical" evidence="1">
    <location>
        <begin position="478"/>
        <end position="498"/>
    </location>
</feature>
<feature type="topological domain" description="Cytoplasmic" evidence="1">
    <location>
        <begin position="499"/>
        <end position="526"/>
    </location>
</feature>
<feature type="glycosylation site" description="N-linked (GlcNAc...) asparagine" evidence="1">
    <location>
        <position position="32"/>
    </location>
</feature>
<feature type="glycosylation site" description="N-linked (GlcNAc...) asparagine" evidence="1">
    <location>
        <position position="60"/>
    </location>
</feature>
<feature type="glycosylation site" description="N-linked (GlcNAc...) asparagine" evidence="1">
    <location>
        <position position="80"/>
    </location>
</feature>
<feature type="glycosylation site" description="N-linked (GlcNAc...) asparagine" evidence="1">
    <location>
        <position position="89"/>
    </location>
</feature>
<feature type="glycosylation site" description="N-linked (GlcNAc...) asparagine" evidence="1">
    <location>
        <position position="156"/>
    </location>
</feature>
<feature type="glycosylation site" description="N-linked (GlcNAc...) asparagine" evidence="1">
    <location>
        <position position="171"/>
    </location>
</feature>
<feature type="glycosylation site" description="N-linked (GlcNAc...) asparagine" evidence="1">
    <location>
        <position position="175"/>
    </location>
</feature>
<feature type="glycosylation site" description="N-linked (GlcNAc...) asparagine" evidence="1">
    <location>
        <position position="202"/>
    </location>
</feature>
<feature type="glycosylation site" description="N-linked (GlcNAc...) asparagine" evidence="1">
    <location>
        <position position="240"/>
    </location>
</feature>
<feature type="glycosylation site" description="N-linked (GlcNAc...) asparagine" evidence="1">
    <location>
        <position position="259"/>
    </location>
</feature>
<feature type="glycosylation site" description="N-linked (GlcNAc...) asparagine" evidence="1">
    <location>
        <position position="311"/>
    </location>
</feature>
<feature type="glycosylation site" description="N-linked (GlcNAc...) asparagine" evidence="1">
    <location>
        <position position="362"/>
    </location>
</feature>
<feature type="glycosylation site" description="N-linked (GlcNAc...) asparagine" evidence="1">
    <location>
        <position position="433"/>
    </location>
</feature>
<name>MTC6_YEAST</name>
<gene>
    <name type="primary">MTC6</name>
    <name type="ordered locus">YHR151C</name>
</gene>
<comment type="function">
    <text evidence="2">May be involved in telomere capping.</text>
</comment>
<comment type="subcellular location">
    <subcellularLocation>
        <location evidence="3">Membrane</location>
        <topology evidence="3">Single-pass type I membrane protein</topology>
    </subcellularLocation>
</comment>
<comment type="similarity">
    <text evidence="3">Belongs to the MTC6 family.</text>
</comment>
<dbReference type="EMBL" id="U10397">
    <property type="protein sequence ID" value="AAB68988.1"/>
    <property type="molecule type" value="Genomic_DNA"/>
</dbReference>
<dbReference type="EMBL" id="BK006934">
    <property type="protein sequence ID" value="DAA06844.1"/>
    <property type="molecule type" value="Genomic_DNA"/>
</dbReference>
<dbReference type="PIR" id="S46766">
    <property type="entry name" value="S46766"/>
</dbReference>
<dbReference type="RefSeq" id="NP_012021.1">
    <property type="nucleotide sequence ID" value="NM_001179282.1"/>
</dbReference>
<dbReference type="BioGRID" id="36585">
    <property type="interactions" value="148"/>
</dbReference>
<dbReference type="DIP" id="DIP-5623N"/>
<dbReference type="FunCoup" id="P38849">
    <property type="interactions" value="31"/>
</dbReference>
<dbReference type="STRING" id="4932.YHR151C"/>
<dbReference type="GlyCosmos" id="P38849">
    <property type="glycosylation" value="13 sites, No reported glycans"/>
</dbReference>
<dbReference type="GlyGen" id="P38849">
    <property type="glycosylation" value="13 sites"/>
</dbReference>
<dbReference type="iPTMnet" id="P38849"/>
<dbReference type="PaxDb" id="4932-YHR151C"/>
<dbReference type="PeptideAtlas" id="P38849"/>
<dbReference type="EnsemblFungi" id="YHR151C_mRNA">
    <property type="protein sequence ID" value="YHR151C"/>
    <property type="gene ID" value="YHR151C"/>
</dbReference>
<dbReference type="GeneID" id="856556"/>
<dbReference type="KEGG" id="sce:YHR151C"/>
<dbReference type="AGR" id="SGD:S000001194"/>
<dbReference type="SGD" id="S000001194">
    <property type="gene designation" value="MTC6"/>
</dbReference>
<dbReference type="VEuPathDB" id="FungiDB:YHR151C"/>
<dbReference type="eggNOG" id="ENOG502QVFP">
    <property type="taxonomic scope" value="Eukaryota"/>
</dbReference>
<dbReference type="HOGENOM" id="CLU_033723_0_0_1"/>
<dbReference type="InParanoid" id="P38849"/>
<dbReference type="OMA" id="WGTIDPQ"/>
<dbReference type="OrthoDB" id="5573651at2759"/>
<dbReference type="BioCyc" id="YEAST:G3O-31186-MONOMER"/>
<dbReference type="BioGRID-ORCS" id="856556">
    <property type="hits" value="0 hits in 10 CRISPR screens"/>
</dbReference>
<dbReference type="PRO" id="PR:P38849"/>
<dbReference type="Proteomes" id="UP000002311">
    <property type="component" value="Chromosome VIII"/>
</dbReference>
<dbReference type="RNAct" id="P38849">
    <property type="molecule type" value="protein"/>
</dbReference>
<dbReference type="GO" id="GO:0005789">
    <property type="term" value="C:endoplasmic reticulum membrane"/>
    <property type="evidence" value="ECO:0000314"/>
    <property type="project" value="SGD"/>
</dbReference>
<dbReference type="GO" id="GO:0071464">
    <property type="term" value="P:cellular response to hydrostatic pressure"/>
    <property type="evidence" value="ECO:0000315"/>
    <property type="project" value="SGD"/>
</dbReference>
<dbReference type="InterPro" id="IPR051008">
    <property type="entry name" value="Telomere_Capping_Maintenance"/>
</dbReference>
<dbReference type="PANTHER" id="PTHR35518:SF2">
    <property type="entry name" value="MAINTENANCE OF TELOMERE CAPPING PROTEIN 6"/>
    <property type="match status" value="1"/>
</dbReference>
<dbReference type="PANTHER" id="PTHR35518">
    <property type="entry name" value="MAINTENANCE OF TELOMOERE CAPPING"/>
    <property type="match status" value="1"/>
</dbReference>
<dbReference type="Pfam" id="PF25506">
    <property type="entry name" value="TIM-barrel_MTC6"/>
    <property type="match status" value="1"/>
</dbReference>
<protein>
    <recommendedName>
        <fullName>Maintenance of telomere capping protein 6</fullName>
    </recommendedName>
</protein>
<accession>P38849</accession>
<accession>D3DLA0</accession>
<evidence type="ECO:0000255" key="1"/>
<evidence type="ECO:0000269" key="2">
    <source>
    </source>
</evidence>
<evidence type="ECO:0000305" key="3"/>
<sequence length="526" mass="59818">MWILIYLFIIWSSLRTWVTAVDSTTTVGDDLNETVSASVWPTMSPQMTVAFRSQRDVMGNLTIDQLPYVGLNLRRVLLNNETSMVNEGNNTRLLTLFKSMLSSEANAFVLDLEQYNNDLRVVDTTLLFSDVLTALQSFIFSTQNNLYANIIVLLLNISAPELDSTEYRHQNQTLNTTYILDKNLGNSFIYKPTDLQSDRAKNNTWNIYGKSSIDGWPTLGSVLYEQKKRLVIGELTDFFNETTAPYIFPHDVFHYEQGNSTLDCPSTVEGLTDLSSIHWRFLDSLFNSVDIKEYISCGLSPIISNSAYVNNVTQLADIIHEGSVWSWDSDQPSVTQSTSKSGSSSGTLEAYNCVLLYYFANNETVTWRVGNCYNSNIGLCRYENMAFRWLVRSNKATYFDFDSYQGSKCPDQYSFNIPRSPLEQRSFIAYMRNSSFSDTQIWIDLNSISVSNCWVSGGPYASCPYEKVISRRNFVTMMVPASVCSFALLCIVVYLSVLRVPIYDNRKNWRRVINKISKSELEGVPS</sequence>
<proteinExistence type="inferred from homology"/>
<keyword id="KW-0325">Glycoprotein</keyword>
<keyword id="KW-0472">Membrane</keyword>
<keyword id="KW-1185">Reference proteome</keyword>
<keyword id="KW-0732">Signal</keyword>
<keyword id="KW-0812">Transmembrane</keyword>
<keyword id="KW-1133">Transmembrane helix</keyword>